<feature type="chain" id="PRO_0000424281" description="Pumilio domain-containing protein 6">
    <location>
        <begin position="1"/>
        <end position="485"/>
    </location>
</feature>
<feature type="repeat" description="Pumilio 1" evidence="2">
    <location>
        <begin position="86"/>
        <end position="124"/>
    </location>
</feature>
<feature type="repeat" description="Pumilio 2" evidence="2">
    <location>
        <begin position="125"/>
        <end position="163"/>
    </location>
</feature>
<feature type="repeat" description="Pumilio 3" evidence="2">
    <location>
        <begin position="164"/>
        <end position="200"/>
    </location>
</feature>
<feature type="repeat" description="Pumilio 4" evidence="2">
    <location>
        <begin position="201"/>
        <end position="236"/>
    </location>
</feature>
<feature type="repeat" description="Pumilio 5" evidence="2">
    <location>
        <begin position="237"/>
        <end position="279"/>
    </location>
</feature>
<feature type="repeat" description="Pumilio 6" evidence="2">
    <location>
        <begin position="287"/>
        <end position="324"/>
    </location>
</feature>
<feature type="repeat" description="Pumilio 7" evidence="2">
    <location>
        <begin position="326"/>
        <end position="361"/>
    </location>
</feature>
<feature type="repeat" description="Pumilio 8" evidence="2">
    <location>
        <begin position="372"/>
        <end position="411"/>
    </location>
</feature>
<feature type="region of interest" description="Disordered" evidence="3">
    <location>
        <begin position="29"/>
        <end position="48"/>
    </location>
</feature>
<feature type="region of interest" description="Disordered" evidence="3">
    <location>
        <begin position="55"/>
        <end position="76"/>
    </location>
</feature>
<feature type="region of interest" description="RNA-binding" evidence="1">
    <location>
        <begin position="439"/>
        <end position="454"/>
    </location>
</feature>
<feature type="compositionally biased region" description="Polar residues" evidence="3">
    <location>
        <begin position="55"/>
        <end position="68"/>
    </location>
</feature>
<name>PUF6_CAEEL</name>
<comment type="function">
    <text evidence="5 6 7">RNA-binding protein that binds to the consensus sequence 5'-CUCUGUAUCUUGU-3' in mRNA 3'-UTRs and modulates mRNA expression and stability. Functions redundantly with puf-5 and puf-7 in oocyte formation and organization, early embryonic cell divisions, and repression of expression of glp-1 and other maternal mRNAs in late oogenesis.</text>
</comment>
<comment type="disruption phenotype">
    <text evidence="4 5 7">Simultaneous knockdown of puf-6 and puf-7 results in ectopic primordial germ cells (PGCs) outside the somatic gonads, premature PGC proliferation in L1 larvae and germ cell death. Does not affect germline development in adult hermaphrodites. Disruption with puf-5 and puf-7 results in abnormally small oocytes, disorganization of oocyte nuclei and cells, inefficient yolk uptake by oocytes, embryonic arrest with impaired eggshell formation and cytokinesis defects, impaired repression of glp-1 in late oogenesis, and mislocalization of rme-2 to the cytoplasm instead of the plasma membrane.</text>
</comment>
<comment type="miscellaneous">
    <text evidence="9">Puf-6 and puf-7 are &gt;98% identical on both nucleotide and protein sequence level. Experimental approaches often do not distinguish between the two genes, which are collectively referred to as puf6/7 and are considered to be functionally redundant.</text>
</comment>
<protein>
    <recommendedName>
        <fullName evidence="8">Pumilio domain-containing protein 6</fullName>
    </recommendedName>
</protein>
<keyword id="KW-0131">Cell cycle</keyword>
<keyword id="KW-0132">Cell division</keyword>
<keyword id="KW-0217">Developmental protein</keyword>
<keyword id="KW-0221">Differentiation</keyword>
<keyword id="KW-0896">Oogenesis</keyword>
<keyword id="KW-1185">Reference proteome</keyword>
<keyword id="KW-0677">Repeat</keyword>
<keyword id="KW-0694">RNA-binding</keyword>
<keyword id="KW-0810">Translation regulation</keyword>
<evidence type="ECO:0000250" key="1">
    <source>
        <dbReference type="UniProtKB" id="O44169"/>
    </source>
</evidence>
<evidence type="ECO:0000255" key="2"/>
<evidence type="ECO:0000256" key="3">
    <source>
        <dbReference type="SAM" id="MobiDB-lite"/>
    </source>
</evidence>
<evidence type="ECO:0000269" key="4">
    <source>
    </source>
</evidence>
<evidence type="ECO:0000269" key="5">
    <source>
    </source>
</evidence>
<evidence type="ECO:0000269" key="6">
    <source>
    </source>
</evidence>
<evidence type="ECO:0000269" key="7">
    <source>
    </source>
</evidence>
<evidence type="ECO:0000303" key="8">
    <source>
    </source>
</evidence>
<evidence type="ECO:0000305" key="9"/>
<evidence type="ECO:0000312" key="10">
    <source>
        <dbReference type="EMBL" id="CAB04133.1"/>
    </source>
</evidence>
<evidence type="ECO:0000312" key="11">
    <source>
        <dbReference type="WormBase" id="F18A11.1"/>
    </source>
</evidence>
<accession>O01322</accession>
<dbReference type="EMBL" id="Z81507">
    <property type="protein sequence ID" value="CAB04133.1"/>
    <property type="molecule type" value="Genomic_DNA"/>
</dbReference>
<dbReference type="PIR" id="T21080">
    <property type="entry name" value="T21080"/>
</dbReference>
<dbReference type="RefSeq" id="NP_496773.1">
    <property type="nucleotide sequence ID" value="NM_064372.8"/>
</dbReference>
<dbReference type="SMR" id="O01322"/>
<dbReference type="BioGRID" id="40245">
    <property type="interactions" value="2"/>
</dbReference>
<dbReference type="FunCoup" id="O01322">
    <property type="interactions" value="46"/>
</dbReference>
<dbReference type="STRING" id="6239.F18A11.1.2"/>
<dbReference type="PaxDb" id="6239-F18A11.1.1"/>
<dbReference type="PeptideAtlas" id="O01322"/>
<dbReference type="EnsemblMetazoa" id="F18A11.1.1">
    <property type="protein sequence ID" value="F18A11.1.1"/>
    <property type="gene ID" value="WBGene00004242"/>
</dbReference>
<dbReference type="GeneID" id="174947"/>
<dbReference type="KEGG" id="cel:CELE_F18A11.1"/>
<dbReference type="UCSC" id="F18A11.1.1">
    <property type="organism name" value="c. elegans"/>
</dbReference>
<dbReference type="AGR" id="WB:WBGene00004242"/>
<dbReference type="CTD" id="174947"/>
<dbReference type="WormBase" id="F18A11.1">
    <property type="protein sequence ID" value="CE09451"/>
    <property type="gene ID" value="WBGene00004242"/>
    <property type="gene designation" value="puf-6"/>
</dbReference>
<dbReference type="eggNOG" id="KOG1488">
    <property type="taxonomic scope" value="Eukaryota"/>
</dbReference>
<dbReference type="GeneTree" id="ENSGT00970000196107"/>
<dbReference type="HOGENOM" id="CLU_028494_0_0_1"/>
<dbReference type="InParanoid" id="O01322"/>
<dbReference type="OMA" id="NGRIARC"/>
<dbReference type="OrthoDB" id="668540at2759"/>
<dbReference type="PhylomeDB" id="O01322"/>
<dbReference type="PRO" id="PR:O01322"/>
<dbReference type="Proteomes" id="UP000001940">
    <property type="component" value="Chromosome II"/>
</dbReference>
<dbReference type="Bgee" id="WBGene00004242">
    <property type="expression patterns" value="Expressed in adult organism and 2 other cell types or tissues"/>
</dbReference>
<dbReference type="GO" id="GO:0005737">
    <property type="term" value="C:cytoplasm"/>
    <property type="evidence" value="ECO:0000250"/>
    <property type="project" value="WormBase"/>
</dbReference>
<dbReference type="GO" id="GO:0005634">
    <property type="term" value="C:nucleus"/>
    <property type="evidence" value="ECO:0000318"/>
    <property type="project" value="GO_Central"/>
</dbReference>
<dbReference type="GO" id="GO:0003730">
    <property type="term" value="F:mRNA 3'-UTR binding"/>
    <property type="evidence" value="ECO:0000250"/>
    <property type="project" value="WormBase"/>
</dbReference>
<dbReference type="GO" id="GO:0051301">
    <property type="term" value="P:cell division"/>
    <property type="evidence" value="ECO:0007669"/>
    <property type="project" value="UniProtKB-KW"/>
</dbReference>
<dbReference type="GO" id="GO:0007281">
    <property type="term" value="P:germ cell development"/>
    <property type="evidence" value="ECO:0000315"/>
    <property type="project" value="WormBase"/>
</dbReference>
<dbReference type="GO" id="GO:0006402">
    <property type="term" value="P:mRNA catabolic process"/>
    <property type="evidence" value="ECO:0000250"/>
    <property type="project" value="WormBase"/>
</dbReference>
<dbReference type="GO" id="GO:0008285">
    <property type="term" value="P:negative regulation of cell population proliferation"/>
    <property type="evidence" value="ECO:0000315"/>
    <property type="project" value="WormBase"/>
</dbReference>
<dbReference type="GO" id="GO:0017148">
    <property type="term" value="P:negative regulation of translation"/>
    <property type="evidence" value="ECO:0000250"/>
    <property type="project" value="WormBase"/>
</dbReference>
<dbReference type="GO" id="GO:0048477">
    <property type="term" value="P:oogenesis"/>
    <property type="evidence" value="ECO:0007669"/>
    <property type="project" value="UniProtKB-KW"/>
</dbReference>
<dbReference type="GO" id="GO:0010608">
    <property type="term" value="P:post-transcriptional regulation of gene expression"/>
    <property type="evidence" value="ECO:0000318"/>
    <property type="project" value="GO_Central"/>
</dbReference>
<dbReference type="FunFam" id="1.25.10.10:FF:000558">
    <property type="entry name" value="Fem-3 mRNA-binding factor 2"/>
    <property type="match status" value="1"/>
</dbReference>
<dbReference type="Gene3D" id="1.25.10.10">
    <property type="entry name" value="Leucine-rich Repeat Variant"/>
    <property type="match status" value="1"/>
</dbReference>
<dbReference type="InterPro" id="IPR011989">
    <property type="entry name" value="ARM-like"/>
</dbReference>
<dbReference type="InterPro" id="IPR016024">
    <property type="entry name" value="ARM-type_fold"/>
</dbReference>
<dbReference type="InterPro" id="IPR033133">
    <property type="entry name" value="PUM-HD"/>
</dbReference>
<dbReference type="InterPro" id="IPR001313">
    <property type="entry name" value="Pumilio_RNA-bd_rpt"/>
</dbReference>
<dbReference type="PANTHER" id="PTHR12537:SF26">
    <property type="entry name" value="PUMILIO DOMAIN-CONTAINING PROTEIN 5-RELATED"/>
    <property type="match status" value="1"/>
</dbReference>
<dbReference type="PANTHER" id="PTHR12537">
    <property type="entry name" value="RNA BINDING PROTEIN PUMILIO-RELATED"/>
    <property type="match status" value="1"/>
</dbReference>
<dbReference type="Pfam" id="PF00806">
    <property type="entry name" value="PUF"/>
    <property type="match status" value="7"/>
</dbReference>
<dbReference type="SMART" id="SM00025">
    <property type="entry name" value="Pumilio"/>
    <property type="match status" value="7"/>
</dbReference>
<dbReference type="SUPFAM" id="SSF48371">
    <property type="entry name" value="ARM repeat"/>
    <property type="match status" value="1"/>
</dbReference>
<dbReference type="PROSITE" id="PS50302">
    <property type="entry name" value="PUM"/>
    <property type="match status" value="8"/>
</dbReference>
<dbReference type="PROSITE" id="PS50303">
    <property type="entry name" value="PUM_HD"/>
    <property type="match status" value="1"/>
</dbReference>
<gene>
    <name evidence="10 11" type="primary">puf-6</name>
    <name type="ORF">F18A11.1</name>
</gene>
<proteinExistence type="evidence at transcript level"/>
<reference evidence="9" key="1">
    <citation type="journal article" date="2007" name="Dev. Biol.">
        <title>The RNA-binding proteins PUF-5, PUF-6, and PUF-7 reveal multiple systems for maternal mRNA regulation during C. elegans oogenesis.</title>
        <authorList>
            <person name="Lublin A.L."/>
            <person name="Evans T.C."/>
        </authorList>
    </citation>
    <scope>NUCLEOTIDE SEQUENCE [MRNA]</scope>
    <scope>FUNCTION</scope>
    <scope>DISRUPTION PHENOTYPE</scope>
</reference>
<reference evidence="10" key="2">
    <citation type="journal article" date="1998" name="Science">
        <title>Genome sequence of the nematode C. elegans: a platform for investigating biology.</title>
        <authorList>
            <consortium name="The C. elegans sequencing consortium"/>
        </authorList>
    </citation>
    <scope>NUCLEOTIDE SEQUENCE [LARGE SCALE GENOMIC DNA]</scope>
    <source>
        <strain evidence="10">Bristol N2</strain>
    </source>
</reference>
<reference evidence="9" key="3">
    <citation type="journal article" date="1999" name="Development">
        <title>nos-1 and nos-2, two genes related to Drosophila nanos, regulate primordial germ cell development and survival in Caenorhabditis elegans.</title>
        <authorList>
            <person name="Subramaniam K."/>
            <person name="Seydoux G."/>
        </authorList>
    </citation>
    <scope>DISRUPTION PHENOTYPE</scope>
</reference>
<reference evidence="9" key="4">
    <citation type="journal article" date="2008" name="RNA">
        <title>A Caenorhabditis elegans PUF protein family with distinct RNA binding specificity.</title>
        <authorList>
            <person name="Stumpf C.R."/>
            <person name="Kimble J."/>
            <person name="Wickens M."/>
        </authorList>
    </citation>
    <scope>FUNCTION</scope>
</reference>
<reference evidence="9" key="5">
    <citation type="journal article" date="2012" name="Dev. Biol.">
        <title>A network of PUF proteins and Ras signaling promote mRNA repression and oogenesis in C. elegans.</title>
        <authorList>
            <person name="Hubstenberger A."/>
            <person name="Cameron C."/>
            <person name="Shtofman R."/>
            <person name="Gutman S."/>
            <person name="Evans T.C."/>
        </authorList>
    </citation>
    <scope>FUNCTION</scope>
    <scope>DISRUPTION PHENOTYPE</scope>
</reference>
<sequence>MTPNRRSTDSYNMLGASFDFDPDFSLLSNKTHKNKNPKPPVKLLPYRHGSNTTSSDLDNYIFNSGSGSSDDETPPPAAPIFISLEEVLLNGLLIDFAIDPSGVKFLEANYPLDSEDQIRKAVFEKLTESTTLFVGLCHSRNGNFIVQKLVELATPAEQRELLRQMIDGGLLVMCKDKFACRVVQLALQKFDHSNVFQLIQELSTFDLAAMCTDQISIHVIQRVVKQLPVDMWTFFVHFLSSGDSLMAVCQDKYGCRLVQQVIDRLAENPKLPCFKFRIQLLHSLMTCIVRNCYRLSSNEFANYVIQYVIKSSGIMEMYRDTIIDKCLLRNLLSMSQDKYASHVIEGAFLFAPPALLHEMMEEIFSGYVKDVELNRDALDILLFHQYGNYVVQQMISICTAALIGKEERQLPPAILLLYSGWYEKMKQRVLQHASRLERFSSGKKIIDSVMRHGVPTAAAINAQAAPSLMELTAQFDAMFPSFLAR</sequence>
<organism>
    <name type="scientific">Caenorhabditis elegans</name>
    <dbReference type="NCBI Taxonomy" id="6239"/>
    <lineage>
        <taxon>Eukaryota</taxon>
        <taxon>Metazoa</taxon>
        <taxon>Ecdysozoa</taxon>
        <taxon>Nematoda</taxon>
        <taxon>Chromadorea</taxon>
        <taxon>Rhabditida</taxon>
        <taxon>Rhabditina</taxon>
        <taxon>Rhabditomorpha</taxon>
        <taxon>Rhabditoidea</taxon>
        <taxon>Rhabditidae</taxon>
        <taxon>Peloderinae</taxon>
        <taxon>Caenorhabditis</taxon>
    </lineage>
</organism>